<reference key="1">
    <citation type="journal article" date="2003" name="Mol. Plant Microbe Interact.">
        <title>A luxR homolog, aviR, in Agrobacterium vitis is associated with induction of necrosis on grape and a hypersensitive response on tobacco.</title>
        <authorList>
            <person name="Zheng D."/>
            <person name="Zhang H."/>
            <person name="Carle S."/>
            <person name="Hao G."/>
            <person name="Holden M.R."/>
            <person name="Burr T.J."/>
        </authorList>
    </citation>
    <scope>NUCLEOTIDE SEQUENCE [GENOMIC DNA]</scope>
    <source>
        <strain>F2/5</strain>
    </source>
</reference>
<protein>
    <recommendedName>
        <fullName evidence="2">Beta-(1--&gt;2)glucan export ATP-binding/permease protein NdvA</fullName>
        <ecNumber evidence="2">7.5.2.3</ecNumber>
    </recommendedName>
</protein>
<keyword id="KW-0067">ATP-binding</keyword>
<keyword id="KW-0997">Cell inner membrane</keyword>
<keyword id="KW-1003">Cell membrane</keyword>
<keyword id="KW-0472">Membrane</keyword>
<keyword id="KW-0547">Nucleotide-binding</keyword>
<keyword id="KW-0762">Sugar transport</keyword>
<keyword id="KW-1278">Translocase</keyword>
<keyword id="KW-0812">Transmembrane</keyword>
<keyword id="KW-1133">Transmembrane helix</keyword>
<keyword id="KW-0813">Transport</keyword>
<name>NDVA_AGRVI</name>
<gene>
    <name evidence="2" type="primary">ndvA</name>
</gene>
<feature type="chain" id="PRO_0000290238" description="Beta-(1--&gt;2)glucan export ATP-binding/permease protein NdvA">
    <location>
        <begin position="1"/>
        <end position="584"/>
    </location>
</feature>
<feature type="transmembrane region" description="Helical" evidence="2">
    <location>
        <begin position="29"/>
        <end position="49"/>
    </location>
</feature>
<feature type="transmembrane region" description="Helical" evidence="2">
    <location>
        <begin position="57"/>
        <end position="77"/>
    </location>
</feature>
<feature type="transmembrane region" description="Helical" evidence="2">
    <location>
        <begin position="136"/>
        <end position="156"/>
    </location>
</feature>
<feature type="transmembrane region" description="Helical" evidence="2">
    <location>
        <begin position="158"/>
        <end position="178"/>
    </location>
</feature>
<feature type="transmembrane region" description="Helical" evidence="2">
    <location>
        <begin position="248"/>
        <end position="268"/>
    </location>
</feature>
<feature type="transmembrane region" description="Helical" evidence="2">
    <location>
        <begin position="272"/>
        <end position="292"/>
    </location>
</feature>
<feature type="domain" description="ABC transmembrane type-1" evidence="2">
    <location>
        <begin position="21"/>
        <end position="301"/>
    </location>
</feature>
<feature type="domain" description="ABC transporter" evidence="2">
    <location>
        <begin position="335"/>
        <end position="569"/>
    </location>
</feature>
<feature type="binding site" evidence="2">
    <location>
        <begin position="368"/>
        <end position="375"/>
    </location>
    <ligand>
        <name>ATP</name>
        <dbReference type="ChEBI" id="CHEBI:30616"/>
    </ligand>
</feature>
<comment type="function">
    <text evidence="1">Involved in beta-(1--&gt;2)glucan export. Transmembrane domains (TMD) form a pore in the inner membrane and the ATP-binding domain (NBD) is responsible for energy generation (By similarity).</text>
</comment>
<comment type="catalytic activity">
    <reaction evidence="2">
        <text>[(1-&gt;2)-beta-D-glucosyl](n)(in) + ATP + H2O = [(1-&gt;2)-beta-D-glucosyl](n)(out) + ADP + phosphate + H(+)</text>
        <dbReference type="Rhea" id="RHEA:18453"/>
        <dbReference type="Rhea" id="RHEA-COMP:11881"/>
        <dbReference type="ChEBI" id="CHEBI:15377"/>
        <dbReference type="ChEBI" id="CHEBI:15378"/>
        <dbReference type="ChEBI" id="CHEBI:27517"/>
        <dbReference type="ChEBI" id="CHEBI:30616"/>
        <dbReference type="ChEBI" id="CHEBI:43474"/>
        <dbReference type="ChEBI" id="CHEBI:456216"/>
        <dbReference type="EC" id="7.5.2.3"/>
    </reaction>
</comment>
<comment type="subunit">
    <text evidence="2">Homodimer.</text>
</comment>
<comment type="subcellular location">
    <subcellularLocation>
        <location evidence="2">Cell inner membrane</location>
        <topology evidence="2">Multi-pass membrane protein</topology>
    </subcellularLocation>
</comment>
<comment type="domain">
    <text>In NdvA the ATP-binding domain (NBD) and the transmembrane domain (TMD) are fused.</text>
</comment>
<comment type="similarity">
    <text evidence="2">Belongs to the ABC transporter superfamily. Beta-(1--&gt;2)glucan exporter (TC 3.A.1.108.1) family.</text>
</comment>
<dbReference type="EC" id="7.5.2.3" evidence="2"/>
<dbReference type="EMBL" id="AF521015">
    <property type="protein sequence ID" value="AAQ08607.1"/>
    <property type="molecule type" value="Genomic_DNA"/>
</dbReference>
<dbReference type="SMR" id="Q71ED1"/>
<dbReference type="GO" id="GO:0005886">
    <property type="term" value="C:plasma membrane"/>
    <property type="evidence" value="ECO:0007669"/>
    <property type="project" value="UniProtKB-SubCell"/>
</dbReference>
<dbReference type="GO" id="GO:0015441">
    <property type="term" value="F:ABC-type beta-glucan transporter activity"/>
    <property type="evidence" value="ECO:0007669"/>
    <property type="project" value="UniProtKB-EC"/>
</dbReference>
<dbReference type="GO" id="GO:0015421">
    <property type="term" value="F:ABC-type oligopeptide transporter activity"/>
    <property type="evidence" value="ECO:0007669"/>
    <property type="project" value="TreeGrafter"/>
</dbReference>
<dbReference type="GO" id="GO:0005524">
    <property type="term" value="F:ATP binding"/>
    <property type="evidence" value="ECO:0007669"/>
    <property type="project" value="UniProtKB-KW"/>
</dbReference>
<dbReference type="GO" id="GO:0016887">
    <property type="term" value="F:ATP hydrolysis activity"/>
    <property type="evidence" value="ECO:0007669"/>
    <property type="project" value="InterPro"/>
</dbReference>
<dbReference type="CDD" id="cd18562">
    <property type="entry name" value="ABC_6TM_NdvA_beta-glucan_exporter_like"/>
    <property type="match status" value="1"/>
</dbReference>
<dbReference type="CDD" id="cd03254">
    <property type="entry name" value="ABCC_Glucan_exporter_like"/>
    <property type="match status" value="1"/>
</dbReference>
<dbReference type="FunFam" id="3.40.50.300:FF:000221">
    <property type="entry name" value="Multidrug ABC transporter ATP-binding protein"/>
    <property type="match status" value="1"/>
</dbReference>
<dbReference type="Gene3D" id="1.20.1560.10">
    <property type="entry name" value="ABC transporter type 1, transmembrane domain"/>
    <property type="match status" value="1"/>
</dbReference>
<dbReference type="Gene3D" id="3.40.50.300">
    <property type="entry name" value="P-loop containing nucleotide triphosphate hydrolases"/>
    <property type="match status" value="1"/>
</dbReference>
<dbReference type="InterPro" id="IPR003593">
    <property type="entry name" value="AAA+_ATPase"/>
</dbReference>
<dbReference type="InterPro" id="IPR011527">
    <property type="entry name" value="ABC1_TM_dom"/>
</dbReference>
<dbReference type="InterPro" id="IPR036640">
    <property type="entry name" value="ABC1_TM_sf"/>
</dbReference>
<dbReference type="InterPro" id="IPR003439">
    <property type="entry name" value="ABC_transporter-like_ATP-bd"/>
</dbReference>
<dbReference type="InterPro" id="IPR017871">
    <property type="entry name" value="ABC_transporter-like_CS"/>
</dbReference>
<dbReference type="InterPro" id="IPR005896">
    <property type="entry name" value="NdvA"/>
</dbReference>
<dbReference type="InterPro" id="IPR027417">
    <property type="entry name" value="P-loop_NTPase"/>
</dbReference>
<dbReference type="InterPro" id="IPR039421">
    <property type="entry name" value="Type_1_exporter"/>
</dbReference>
<dbReference type="NCBIfam" id="TIGR01192">
    <property type="entry name" value="chvA"/>
    <property type="match status" value="1"/>
</dbReference>
<dbReference type="NCBIfam" id="NF010178">
    <property type="entry name" value="PRK13657.1"/>
    <property type="match status" value="1"/>
</dbReference>
<dbReference type="PANTHER" id="PTHR43394:SF1">
    <property type="entry name" value="ATP-BINDING CASSETTE SUB-FAMILY B MEMBER 10, MITOCHONDRIAL"/>
    <property type="match status" value="1"/>
</dbReference>
<dbReference type="PANTHER" id="PTHR43394">
    <property type="entry name" value="ATP-DEPENDENT PERMEASE MDL1, MITOCHONDRIAL"/>
    <property type="match status" value="1"/>
</dbReference>
<dbReference type="Pfam" id="PF00664">
    <property type="entry name" value="ABC_membrane"/>
    <property type="match status" value="1"/>
</dbReference>
<dbReference type="Pfam" id="PF00005">
    <property type="entry name" value="ABC_tran"/>
    <property type="match status" value="1"/>
</dbReference>
<dbReference type="SMART" id="SM00382">
    <property type="entry name" value="AAA"/>
    <property type="match status" value="1"/>
</dbReference>
<dbReference type="SUPFAM" id="SSF90123">
    <property type="entry name" value="ABC transporter transmembrane region"/>
    <property type="match status" value="1"/>
</dbReference>
<dbReference type="SUPFAM" id="SSF52540">
    <property type="entry name" value="P-loop containing nucleoside triphosphate hydrolases"/>
    <property type="match status" value="1"/>
</dbReference>
<dbReference type="PROSITE" id="PS50929">
    <property type="entry name" value="ABC_TM1F"/>
    <property type="match status" value="1"/>
</dbReference>
<dbReference type="PROSITE" id="PS00211">
    <property type="entry name" value="ABC_TRANSPORTER_1"/>
    <property type="match status" value="1"/>
</dbReference>
<dbReference type="PROSITE" id="PS50893">
    <property type="entry name" value="ABC_TRANSPORTER_2"/>
    <property type="match status" value="1"/>
</dbReference>
<dbReference type="PROSITE" id="PS51317">
    <property type="entry name" value="NDVA"/>
    <property type="match status" value="1"/>
</dbReference>
<proteinExistence type="inferred from homology"/>
<evidence type="ECO:0000250" key="1"/>
<evidence type="ECO:0000255" key="2">
    <source>
        <dbReference type="HAMAP-Rule" id="MF_01728"/>
    </source>
</evidence>
<organism>
    <name type="scientific">Agrobacterium vitis</name>
    <name type="common">Rhizobium vitis</name>
    <dbReference type="NCBI Taxonomy" id="373"/>
    <lineage>
        <taxon>Bacteria</taxon>
        <taxon>Pseudomonadati</taxon>
        <taxon>Pseudomonadota</taxon>
        <taxon>Alphaproteobacteria</taxon>
        <taxon>Hyphomicrobiales</taxon>
        <taxon>Rhizobiaceae</taxon>
        <taxon>Rhizobium/Agrobacterium group</taxon>
        <taxon>Agrobacterium</taxon>
    </lineage>
</organism>
<sequence>MSLLQIYWRALQYLAAYRLKVSLVVAANIILAVITIAEPILFGWIIDAISSGKPDKDILFLWGGFGIFNTIAFVLVAREADRLAHGRRASLLTEAFGRIISMPLSWHHQRGTSNALHTLLRASETLFGLWLEFMRTHLATAVALVLLVPTAFSMDVRLTLVLIVLGLIYVAIGKMVMDKTKDGQASVESHYHTVFSHVSDTISNVSVVHSYNRIQAETSALKTFTSKLLDAQYPVLDWWAIASGLNRIASTASMLIILIIGTMLVQSGELRVGDVIAFIGFANLLIARLDQMRQFSTQIFEARAKLEDFYVLEDSVQDRDEPVGNRDLKSVRGDVEFRHVSFDFANTTQGVKDVSFTVKAGQTIAIVGPTGAGKTTLINLLQRVHEPQQGQILIDGADISTITRQSLRNSIATVFQDAGILNRSIADNIRIGRENATDEDIVKAAEAAAATDFIESRLSGFDTDVGERGNRLSGGERQRIAIARAILKDAPILVLDEATSALDVETEERVKSAIDRLRQNRTTFIIAHRLSTVREADQVLFLDHGRIVEMGGYDELSAKGGRFAALLHTSGLLNDDDKTAVKVG</sequence>
<accession>Q71ED1</accession>